<sequence length="154" mass="17177">MHCPFCRHPDSRVIDSRETDEGQAIRRRRSCPECGRRFTTVETAVLAVVKRSGVTEPFSREKVISGVRRACQGRQVDDDALNLLAQQVEDSVRAAGSPEIPSHDVGLAILGPLRELDEVAYLRFASVYRSFSSADDFAREIEALRAHRNLSAHS</sequence>
<protein>
    <recommendedName>
        <fullName evidence="1">Transcriptional repressor NrdR</fullName>
    </recommendedName>
</protein>
<proteinExistence type="inferred from homology"/>
<reference key="1">
    <citation type="journal article" date="2007" name="Proc. Natl. Acad. Sci. U.S.A.">
        <title>Genome plasticity of BCG and impact on vaccine efficacy.</title>
        <authorList>
            <person name="Brosch R."/>
            <person name="Gordon S.V."/>
            <person name="Garnier T."/>
            <person name="Eiglmeier K."/>
            <person name="Frigui W."/>
            <person name="Valenti P."/>
            <person name="Dos Santos S."/>
            <person name="Duthoy S."/>
            <person name="Lacroix C."/>
            <person name="Garcia-Pelayo C."/>
            <person name="Inwald J.K."/>
            <person name="Golby P."/>
            <person name="Garcia J.N."/>
            <person name="Hewinson R.G."/>
            <person name="Behr M.A."/>
            <person name="Quail M.A."/>
            <person name="Churcher C."/>
            <person name="Barrell B.G."/>
            <person name="Parkhill J."/>
            <person name="Cole S.T."/>
        </authorList>
    </citation>
    <scope>NUCLEOTIDE SEQUENCE [LARGE SCALE GENOMIC DNA]</scope>
    <source>
        <strain>BCG / Pasteur 1173P2</strain>
    </source>
</reference>
<accession>A1KM56</accession>
<dbReference type="EMBL" id="AM408590">
    <property type="protein sequence ID" value="CAL72719.1"/>
    <property type="molecule type" value="Genomic_DNA"/>
</dbReference>
<dbReference type="RefSeq" id="WP_003413973.1">
    <property type="nucleotide sequence ID" value="NC_008769.1"/>
</dbReference>
<dbReference type="SMR" id="A1KM56"/>
<dbReference type="GeneID" id="45426705"/>
<dbReference type="KEGG" id="mbb:BCG_2731c"/>
<dbReference type="HOGENOM" id="CLU_108412_1_0_11"/>
<dbReference type="Proteomes" id="UP000001472">
    <property type="component" value="Chromosome"/>
</dbReference>
<dbReference type="GO" id="GO:0005524">
    <property type="term" value="F:ATP binding"/>
    <property type="evidence" value="ECO:0007669"/>
    <property type="project" value="UniProtKB-KW"/>
</dbReference>
<dbReference type="GO" id="GO:0003677">
    <property type="term" value="F:DNA binding"/>
    <property type="evidence" value="ECO:0007669"/>
    <property type="project" value="UniProtKB-KW"/>
</dbReference>
<dbReference type="GO" id="GO:0008270">
    <property type="term" value="F:zinc ion binding"/>
    <property type="evidence" value="ECO:0007669"/>
    <property type="project" value="UniProtKB-UniRule"/>
</dbReference>
<dbReference type="GO" id="GO:0045892">
    <property type="term" value="P:negative regulation of DNA-templated transcription"/>
    <property type="evidence" value="ECO:0007669"/>
    <property type="project" value="UniProtKB-UniRule"/>
</dbReference>
<dbReference type="HAMAP" id="MF_00440">
    <property type="entry name" value="NrdR"/>
    <property type="match status" value="1"/>
</dbReference>
<dbReference type="InterPro" id="IPR005144">
    <property type="entry name" value="ATP-cone_dom"/>
</dbReference>
<dbReference type="InterPro" id="IPR055173">
    <property type="entry name" value="NrdR-like_N"/>
</dbReference>
<dbReference type="InterPro" id="IPR003796">
    <property type="entry name" value="RNR_NrdR-like"/>
</dbReference>
<dbReference type="NCBIfam" id="TIGR00244">
    <property type="entry name" value="transcriptional regulator NrdR"/>
    <property type="match status" value="1"/>
</dbReference>
<dbReference type="PANTHER" id="PTHR30455">
    <property type="entry name" value="TRANSCRIPTIONAL REPRESSOR NRDR"/>
    <property type="match status" value="1"/>
</dbReference>
<dbReference type="PANTHER" id="PTHR30455:SF2">
    <property type="entry name" value="TRANSCRIPTIONAL REPRESSOR NRDR"/>
    <property type="match status" value="1"/>
</dbReference>
<dbReference type="Pfam" id="PF03477">
    <property type="entry name" value="ATP-cone"/>
    <property type="match status" value="1"/>
</dbReference>
<dbReference type="Pfam" id="PF22811">
    <property type="entry name" value="Zn_ribbon_NrdR"/>
    <property type="match status" value="1"/>
</dbReference>
<dbReference type="PROSITE" id="PS51161">
    <property type="entry name" value="ATP_CONE"/>
    <property type="match status" value="1"/>
</dbReference>
<gene>
    <name evidence="1" type="primary">nrdR</name>
    <name type="ordered locus">BCG_2731c</name>
</gene>
<comment type="function">
    <text evidence="1">Negatively regulates transcription of bacterial ribonucleotide reductase nrd genes and operons by binding to NrdR-boxes.</text>
</comment>
<comment type="cofactor">
    <cofactor evidence="1">
        <name>Zn(2+)</name>
        <dbReference type="ChEBI" id="CHEBI:29105"/>
    </cofactor>
    <text evidence="1">Binds 1 zinc ion.</text>
</comment>
<comment type="similarity">
    <text evidence="1">Belongs to the NrdR family.</text>
</comment>
<keyword id="KW-0067">ATP-binding</keyword>
<keyword id="KW-0238">DNA-binding</keyword>
<keyword id="KW-0479">Metal-binding</keyword>
<keyword id="KW-0547">Nucleotide-binding</keyword>
<keyword id="KW-0678">Repressor</keyword>
<keyword id="KW-0804">Transcription</keyword>
<keyword id="KW-0805">Transcription regulation</keyword>
<keyword id="KW-0862">Zinc</keyword>
<keyword id="KW-0863">Zinc-finger</keyword>
<evidence type="ECO:0000255" key="1">
    <source>
        <dbReference type="HAMAP-Rule" id="MF_00440"/>
    </source>
</evidence>
<name>NRDR_MYCBP</name>
<feature type="chain" id="PRO_1000080776" description="Transcriptional repressor NrdR">
    <location>
        <begin position="1"/>
        <end position="154"/>
    </location>
</feature>
<feature type="domain" description="ATP-cone" evidence="1">
    <location>
        <begin position="46"/>
        <end position="136"/>
    </location>
</feature>
<feature type="zinc finger region" evidence="1">
    <location>
        <begin position="3"/>
        <end position="34"/>
    </location>
</feature>
<organism>
    <name type="scientific">Mycobacterium bovis (strain BCG / Pasteur 1173P2)</name>
    <dbReference type="NCBI Taxonomy" id="410289"/>
    <lineage>
        <taxon>Bacteria</taxon>
        <taxon>Bacillati</taxon>
        <taxon>Actinomycetota</taxon>
        <taxon>Actinomycetes</taxon>
        <taxon>Mycobacteriales</taxon>
        <taxon>Mycobacteriaceae</taxon>
        <taxon>Mycobacterium</taxon>
        <taxon>Mycobacterium tuberculosis complex</taxon>
    </lineage>
</organism>